<reference key="1">
    <citation type="submission" date="2007-02" db="EMBL/GenBank/DDBJ databases">
        <title>Complete sequence of chromosome of Shewanella baltica OS155.</title>
        <authorList>
            <consortium name="US DOE Joint Genome Institute"/>
            <person name="Copeland A."/>
            <person name="Lucas S."/>
            <person name="Lapidus A."/>
            <person name="Barry K."/>
            <person name="Detter J.C."/>
            <person name="Glavina del Rio T."/>
            <person name="Hammon N."/>
            <person name="Israni S."/>
            <person name="Dalin E."/>
            <person name="Tice H."/>
            <person name="Pitluck S."/>
            <person name="Sims D.R."/>
            <person name="Brettin T."/>
            <person name="Bruce D."/>
            <person name="Han C."/>
            <person name="Tapia R."/>
            <person name="Brainard J."/>
            <person name="Schmutz J."/>
            <person name="Larimer F."/>
            <person name="Land M."/>
            <person name="Hauser L."/>
            <person name="Kyrpides N."/>
            <person name="Mikhailova N."/>
            <person name="Brettar I."/>
            <person name="Klappenbach J."/>
            <person name="Konstantinidis K."/>
            <person name="Rodrigues J."/>
            <person name="Tiedje J."/>
            <person name="Richardson P."/>
        </authorList>
    </citation>
    <scope>NUCLEOTIDE SEQUENCE [LARGE SCALE GENOMIC DNA]</scope>
    <source>
        <strain>OS155 / ATCC BAA-1091</strain>
    </source>
</reference>
<protein>
    <recommendedName>
        <fullName evidence="1">UPF0178 protein Sbal_1771</fullName>
    </recommendedName>
</protein>
<gene>
    <name type="ordered locus">Sbal_1771</name>
</gene>
<feature type="chain" id="PRO_1000014442" description="UPF0178 protein Sbal_1771">
    <location>
        <begin position="1"/>
        <end position="150"/>
    </location>
</feature>
<organism>
    <name type="scientific">Shewanella baltica (strain OS155 / ATCC BAA-1091)</name>
    <dbReference type="NCBI Taxonomy" id="325240"/>
    <lineage>
        <taxon>Bacteria</taxon>
        <taxon>Pseudomonadati</taxon>
        <taxon>Pseudomonadota</taxon>
        <taxon>Gammaproteobacteria</taxon>
        <taxon>Alteromonadales</taxon>
        <taxon>Shewanellaceae</taxon>
        <taxon>Shewanella</taxon>
    </lineage>
</organism>
<proteinExistence type="inferred from homology"/>
<accession>A3D3G5</accession>
<sequence length="150" mass="16641">MSDYKIWVDADACPNPIKEILFRAAERKALPLVLVANQMIRVPPSPYINQIRVGAGFDVADQYIVDHVEPTHLVITADIPLAALIIEKGALALNPRGELYTVDNIKQKLTMRDFMEDLRGSGVHTGGPDSFSQADKQAFANSLDKWLVRV</sequence>
<keyword id="KW-1185">Reference proteome</keyword>
<comment type="similarity">
    <text evidence="1">Belongs to the UPF0178 family.</text>
</comment>
<dbReference type="EMBL" id="CP000563">
    <property type="protein sequence ID" value="ABN61278.1"/>
    <property type="molecule type" value="Genomic_DNA"/>
</dbReference>
<dbReference type="RefSeq" id="WP_011846565.1">
    <property type="nucleotide sequence ID" value="NC_009052.1"/>
</dbReference>
<dbReference type="SMR" id="A3D3G5"/>
<dbReference type="STRING" id="325240.Sbal_1771"/>
<dbReference type="KEGG" id="sbl:Sbal_1771"/>
<dbReference type="HOGENOM" id="CLU_106619_1_0_6"/>
<dbReference type="OrthoDB" id="9798918at2"/>
<dbReference type="Proteomes" id="UP000001557">
    <property type="component" value="Chromosome"/>
</dbReference>
<dbReference type="CDD" id="cd18720">
    <property type="entry name" value="PIN_YqxD-like"/>
    <property type="match status" value="1"/>
</dbReference>
<dbReference type="HAMAP" id="MF_00489">
    <property type="entry name" value="UPF0178"/>
    <property type="match status" value="1"/>
</dbReference>
<dbReference type="InterPro" id="IPR003791">
    <property type="entry name" value="UPF0178"/>
</dbReference>
<dbReference type="NCBIfam" id="NF001095">
    <property type="entry name" value="PRK00124.1"/>
    <property type="match status" value="1"/>
</dbReference>
<dbReference type="PANTHER" id="PTHR35146">
    <property type="entry name" value="UPF0178 PROTEIN YAII"/>
    <property type="match status" value="1"/>
</dbReference>
<dbReference type="PANTHER" id="PTHR35146:SF1">
    <property type="entry name" value="UPF0178 PROTEIN YAII"/>
    <property type="match status" value="1"/>
</dbReference>
<dbReference type="Pfam" id="PF02639">
    <property type="entry name" value="DUF188"/>
    <property type="match status" value="1"/>
</dbReference>
<name>Y1771_SHEB5</name>
<evidence type="ECO:0000255" key="1">
    <source>
        <dbReference type="HAMAP-Rule" id="MF_00489"/>
    </source>
</evidence>